<sequence>MLELPFTTIRPNCRLRQNLGILIILQCVLTCYNFNLEQRLPIVKYGHPHSHFGYSVATHTIGEANGPNKTNCVLVGAPLDQNRQPNTTHSGALWRCPMTQRFDDCEQVITDGRRNFDSEILSPPGNDEIKEDQWMGVTVRSNPLQANGSGGKVIVCAHRYMYIVRENRYGQGLCYLLTNDLQFEEVHEPCKGRPVQRQHEDYGLCQAGTSAALLDDDTMVLGSPGPYTWRGSIWVTQVGGEYLQRDKTTYYSDHSDLNSPVDKYSYLGMSVTGGRFFGHMSYAAGAPRSEGHGQVVIFDKSTDNPIPVHSILDGEQFGSSFGYELATADINGDHRPDLIVAAPLYFTKTEGGAVYVYQNIQDTLPMKYTLKLTGPLESRFGLALANIGDLNKDNCEDLAVGAPYEGNGVVYIYLGSSQGLNSKPAQKIQASELGGTIPNGQPIRTFGISISGNTDLDDNSYPDVVIGAFNSSAAVILLARPIISIQTSVQRKELHNMDPNTPGCLDDPASNLTCFTFRACCSIEPYDEKNKELRLAYSVEAETFDHLKKFSRVFFFDRENKRTNVLSRVVRVHTNGRTECQAVTGYIKANTRDIQTPVRFRLKYSLVEPPLADSALVRLNPILDQTQAHVDFEGTFQKDCGDDDLCESNLIIRVEPNITESSGNEYTLILDETELEVRINVSNLADSAYEAQLFIAHQAGVSYVATKKPTNATCNSYNTTLVACSLGNPMLRDTTTFVTIRFQPKGLEPSEKIMLFHIFANTTSKLVGPERPERDLRVNVVRRAKLNFRGWAIPEQSFYSGSSVANSVANTAATDIEGHGPMGMDDVGSQVHHMFTIFNEGPSTAPKVQMVIHWPYSLYSDPQSGRPVQYLLYLEQVPTVEVSQGECHVAKEYVNPLNLASGSRENPAYLSAPAQMRMFPSQSRHSFNKSLIHSQRSYYSSSHRDDHSDDTQSNRNRVRRSFLERVTRLERLMYDPESSNAANGKKQDIVELDCNKGATNCVRIECDILNMPALSEAQVVVKARLWNSTLVSEYPRVERVRIFSTATAQIPESYGVEVMDHNNIEVETRAYPELRNQQRDTSIPWLIIILGIVGGLLLLALVTYVLWKVGFFKRIRPTDPTLSGNLEKMNEEKPFLAPSKNTHHVF</sequence>
<proteinExistence type="evidence at protein level"/>
<evidence type="ECO:0000255" key="1"/>
<evidence type="ECO:0000255" key="2">
    <source>
        <dbReference type="PROSITE-ProRule" id="PRU00803"/>
    </source>
</evidence>
<evidence type="ECO:0000256" key="3">
    <source>
        <dbReference type="SAM" id="MobiDB-lite"/>
    </source>
</evidence>
<evidence type="ECO:0000269" key="4">
    <source>
    </source>
</evidence>
<evidence type="ECO:0000269" key="5">
    <source>
    </source>
</evidence>
<evidence type="ECO:0000269" key="6">
    <source>
    </source>
</evidence>
<evidence type="ECO:0000269" key="7">
    <source>
    </source>
</evidence>
<evidence type="ECO:0000269" key="8">
    <source>
    </source>
</evidence>
<evidence type="ECO:0000303" key="9">
    <source>
    </source>
</evidence>
<evidence type="ECO:0000305" key="10"/>
<reference key="1">
    <citation type="journal article" date="1993" name="Mech. Dev.">
        <title>Cloning and characterization of alpha PS1, a novel Drosophila melanogaster integrin.</title>
        <authorList>
            <person name="Wehrli M."/>
            <person name="Diantonio A."/>
            <person name="Fearnley I.M."/>
            <person name="Smith R.J."/>
            <person name="Wilcox M."/>
        </authorList>
    </citation>
    <scope>NUCLEOTIDE SEQUENCE [MRNA] (ISOFORM B)</scope>
    <scope>PARTIAL PROTEIN SEQUENCE</scope>
    <scope>TISSUE SPECIFICITY</scope>
    <scope>DEVELOPMENTAL STAGE</scope>
    <source>
        <strain>Oregon-R</strain>
        <tissue>Embryo</tissue>
        <tissue>Larva</tissue>
    </source>
</reference>
<reference key="2">
    <citation type="journal article" date="2000" name="Science">
        <title>The genome sequence of Drosophila melanogaster.</title>
        <authorList>
            <person name="Adams M.D."/>
            <person name="Celniker S.E."/>
            <person name="Holt R.A."/>
            <person name="Evans C.A."/>
            <person name="Gocayne J.D."/>
            <person name="Amanatides P.G."/>
            <person name="Scherer S.E."/>
            <person name="Li P.W."/>
            <person name="Hoskins R.A."/>
            <person name="Galle R.F."/>
            <person name="George R.A."/>
            <person name="Lewis S.E."/>
            <person name="Richards S."/>
            <person name="Ashburner M."/>
            <person name="Henderson S.N."/>
            <person name="Sutton G.G."/>
            <person name="Wortman J.R."/>
            <person name="Yandell M.D."/>
            <person name="Zhang Q."/>
            <person name="Chen L.X."/>
            <person name="Brandon R.C."/>
            <person name="Rogers Y.-H.C."/>
            <person name="Blazej R.G."/>
            <person name="Champe M."/>
            <person name="Pfeiffer B.D."/>
            <person name="Wan K.H."/>
            <person name="Doyle C."/>
            <person name="Baxter E.G."/>
            <person name="Helt G."/>
            <person name="Nelson C.R."/>
            <person name="Miklos G.L.G."/>
            <person name="Abril J.F."/>
            <person name="Agbayani A."/>
            <person name="An H.-J."/>
            <person name="Andrews-Pfannkoch C."/>
            <person name="Baldwin D."/>
            <person name="Ballew R.M."/>
            <person name="Basu A."/>
            <person name="Baxendale J."/>
            <person name="Bayraktaroglu L."/>
            <person name="Beasley E.M."/>
            <person name="Beeson K.Y."/>
            <person name="Benos P.V."/>
            <person name="Berman B.P."/>
            <person name="Bhandari D."/>
            <person name="Bolshakov S."/>
            <person name="Borkova D."/>
            <person name="Botchan M.R."/>
            <person name="Bouck J."/>
            <person name="Brokstein P."/>
            <person name="Brottier P."/>
            <person name="Burtis K.C."/>
            <person name="Busam D.A."/>
            <person name="Butler H."/>
            <person name="Cadieu E."/>
            <person name="Center A."/>
            <person name="Chandra I."/>
            <person name="Cherry J.M."/>
            <person name="Cawley S."/>
            <person name="Dahlke C."/>
            <person name="Davenport L.B."/>
            <person name="Davies P."/>
            <person name="de Pablos B."/>
            <person name="Delcher A."/>
            <person name="Deng Z."/>
            <person name="Mays A.D."/>
            <person name="Dew I."/>
            <person name="Dietz S.M."/>
            <person name="Dodson K."/>
            <person name="Doup L.E."/>
            <person name="Downes M."/>
            <person name="Dugan-Rocha S."/>
            <person name="Dunkov B.C."/>
            <person name="Dunn P."/>
            <person name="Durbin K.J."/>
            <person name="Evangelista C.C."/>
            <person name="Ferraz C."/>
            <person name="Ferriera S."/>
            <person name="Fleischmann W."/>
            <person name="Fosler C."/>
            <person name="Gabrielian A.E."/>
            <person name="Garg N.S."/>
            <person name="Gelbart W.M."/>
            <person name="Glasser K."/>
            <person name="Glodek A."/>
            <person name="Gong F."/>
            <person name="Gorrell J.H."/>
            <person name="Gu Z."/>
            <person name="Guan P."/>
            <person name="Harris M."/>
            <person name="Harris N.L."/>
            <person name="Harvey D.A."/>
            <person name="Heiman T.J."/>
            <person name="Hernandez J.R."/>
            <person name="Houck J."/>
            <person name="Hostin D."/>
            <person name="Houston K.A."/>
            <person name="Howland T.J."/>
            <person name="Wei M.-H."/>
            <person name="Ibegwam C."/>
            <person name="Jalali M."/>
            <person name="Kalush F."/>
            <person name="Karpen G.H."/>
            <person name="Ke Z."/>
            <person name="Kennison J.A."/>
            <person name="Ketchum K.A."/>
            <person name="Kimmel B.E."/>
            <person name="Kodira C.D."/>
            <person name="Kraft C.L."/>
            <person name="Kravitz S."/>
            <person name="Kulp D."/>
            <person name="Lai Z."/>
            <person name="Lasko P."/>
            <person name="Lei Y."/>
            <person name="Levitsky A.A."/>
            <person name="Li J.H."/>
            <person name="Li Z."/>
            <person name="Liang Y."/>
            <person name="Lin X."/>
            <person name="Liu X."/>
            <person name="Mattei B."/>
            <person name="McIntosh T.C."/>
            <person name="McLeod M.P."/>
            <person name="McPherson D."/>
            <person name="Merkulov G."/>
            <person name="Milshina N.V."/>
            <person name="Mobarry C."/>
            <person name="Morris J."/>
            <person name="Moshrefi A."/>
            <person name="Mount S.M."/>
            <person name="Moy M."/>
            <person name="Murphy B."/>
            <person name="Murphy L."/>
            <person name="Muzny D.M."/>
            <person name="Nelson D.L."/>
            <person name="Nelson D.R."/>
            <person name="Nelson K.A."/>
            <person name="Nixon K."/>
            <person name="Nusskern D.R."/>
            <person name="Pacleb J.M."/>
            <person name="Palazzolo M."/>
            <person name="Pittman G.S."/>
            <person name="Pan S."/>
            <person name="Pollard J."/>
            <person name="Puri V."/>
            <person name="Reese M.G."/>
            <person name="Reinert K."/>
            <person name="Remington K."/>
            <person name="Saunders R.D.C."/>
            <person name="Scheeler F."/>
            <person name="Shen H."/>
            <person name="Shue B.C."/>
            <person name="Siden-Kiamos I."/>
            <person name="Simpson M."/>
            <person name="Skupski M.P."/>
            <person name="Smith T.J."/>
            <person name="Spier E."/>
            <person name="Spradling A.C."/>
            <person name="Stapleton M."/>
            <person name="Strong R."/>
            <person name="Sun E."/>
            <person name="Svirskas R."/>
            <person name="Tector C."/>
            <person name="Turner R."/>
            <person name="Venter E."/>
            <person name="Wang A.H."/>
            <person name="Wang X."/>
            <person name="Wang Z.-Y."/>
            <person name="Wassarman D.A."/>
            <person name="Weinstock G.M."/>
            <person name="Weissenbach J."/>
            <person name="Williams S.M."/>
            <person name="Woodage T."/>
            <person name="Worley K.C."/>
            <person name="Wu D."/>
            <person name="Yang S."/>
            <person name="Yao Q.A."/>
            <person name="Ye J."/>
            <person name="Yeh R.-F."/>
            <person name="Zaveri J.S."/>
            <person name="Zhan M."/>
            <person name="Zhang G."/>
            <person name="Zhao Q."/>
            <person name="Zheng L."/>
            <person name="Zheng X.H."/>
            <person name="Zhong F.N."/>
            <person name="Zhong W."/>
            <person name="Zhou X."/>
            <person name="Zhu S.C."/>
            <person name="Zhu X."/>
            <person name="Smith H.O."/>
            <person name="Gibbs R.A."/>
            <person name="Myers E.W."/>
            <person name="Rubin G.M."/>
            <person name="Venter J.C."/>
        </authorList>
    </citation>
    <scope>NUCLEOTIDE SEQUENCE [LARGE SCALE GENOMIC DNA]</scope>
    <source>
        <strain>Berkeley</strain>
    </source>
</reference>
<reference key="3">
    <citation type="journal article" date="2002" name="Genome Biol.">
        <title>Annotation of the Drosophila melanogaster euchromatic genome: a systematic review.</title>
        <authorList>
            <person name="Misra S."/>
            <person name="Crosby M.A."/>
            <person name="Mungall C.J."/>
            <person name="Matthews B.B."/>
            <person name="Campbell K.S."/>
            <person name="Hradecky P."/>
            <person name="Huang Y."/>
            <person name="Kaminker J.S."/>
            <person name="Millburn G.H."/>
            <person name="Prochnik S.E."/>
            <person name="Smith C.D."/>
            <person name="Tupy J.L."/>
            <person name="Whitfield E.J."/>
            <person name="Bayraktaroglu L."/>
            <person name="Berman B.P."/>
            <person name="Bettencourt B.R."/>
            <person name="Celniker S.E."/>
            <person name="de Grey A.D.N.J."/>
            <person name="Drysdale R.A."/>
            <person name="Harris N.L."/>
            <person name="Richter J."/>
            <person name="Russo S."/>
            <person name="Schroeder A.J."/>
            <person name="Shu S.Q."/>
            <person name="Stapleton M."/>
            <person name="Yamada C."/>
            <person name="Ashburner M."/>
            <person name="Gelbart W.M."/>
            <person name="Rubin G.M."/>
            <person name="Lewis S.E."/>
        </authorList>
    </citation>
    <scope>GENOME REANNOTATION</scope>
    <scope>ALTERNATIVE SPLICING</scope>
    <source>
        <strain>Berkeley</strain>
    </source>
</reference>
<reference key="4">
    <citation type="journal article" date="2002" name="Genome Biol.">
        <title>A Drosophila full-length cDNA resource.</title>
        <authorList>
            <person name="Stapleton M."/>
            <person name="Carlson J.W."/>
            <person name="Brokstein P."/>
            <person name="Yu C."/>
            <person name="Champe M."/>
            <person name="George R.A."/>
            <person name="Guarin H."/>
            <person name="Kronmiller B."/>
            <person name="Pacleb J.M."/>
            <person name="Park S."/>
            <person name="Wan K.H."/>
            <person name="Rubin G.M."/>
            <person name="Celniker S.E."/>
        </authorList>
    </citation>
    <scope>NUCLEOTIDE SEQUENCE [LARGE SCALE MRNA] (ISOFORM A)</scope>
    <source>
        <strain>Berkeley</strain>
        <tissue>Head</tissue>
    </source>
</reference>
<reference key="5">
    <citation type="journal article" date="1994" name="Proc. Natl. Acad. Sci. U.S.A.">
        <title>Drosophila PS1 integrin is a laminin receptor and differs in ligand specificity from PS2.</title>
        <authorList>
            <person name="Gotwals P.J."/>
            <person name="Fessler L.I."/>
            <person name="Wehrli M."/>
            <person name="Hynes R.O."/>
        </authorList>
    </citation>
    <scope>FUNCTION</scope>
</reference>
<reference key="6">
    <citation type="journal article" date="2007" name="Glycobiology">
        <title>Identification of N-glycosylated proteins from the central nervous system of Drosophila melanogaster.</title>
        <authorList>
            <person name="Koles K."/>
            <person name="Lim J.-M."/>
            <person name="Aoki K."/>
            <person name="Porterfield M."/>
            <person name="Tiemeyer M."/>
            <person name="Wells L."/>
            <person name="Panin V."/>
        </authorList>
    </citation>
    <scope>GLYCOSYLATION [LARGE SCALE ANALYSIS] AT ASN-657 AND ASN-1027</scope>
    <scope>IDENTIFICATION BY MASS SPECTROMETRY</scope>
    <source>
        <strain>Oregon-R</strain>
        <tissue>Head</tissue>
    </source>
</reference>
<reference key="7">
    <citation type="journal article" date="2008" name="Dev. Dyn.">
        <title>Integrin alpha chains exhibit distinct temporal and spatial localization patterns in epithelial cells of the Drosophila ovary.</title>
        <authorList>
            <person name="Dinkins M.B."/>
            <person name="Fratto V.M."/>
            <person name="Lemosy E.K."/>
        </authorList>
    </citation>
    <scope>SUBCELLULAR LOCATION</scope>
    <scope>TISSUE SPECIFICITY</scope>
    <scope>DEVELOPMENTAL STAGE</scope>
</reference>
<reference key="8">
    <citation type="journal article" date="2009" name="Nat. Biotechnol.">
        <title>Mass-spectrometric identification and relative quantification of N-linked cell surface glycoproteins.</title>
        <authorList>
            <person name="Wollscheid B."/>
            <person name="Bausch-Fluck D."/>
            <person name="Henderson C."/>
            <person name="O'Brien R."/>
            <person name="Bibel M."/>
            <person name="Schiess R."/>
            <person name="Aebersold R."/>
            <person name="Watts J.D."/>
        </authorList>
    </citation>
    <scope>GLYCOSYLATION [LARGE SCALE ANALYSIS] AT ASN-711; ASN-718 AND ASN-761</scope>
    <scope>IDENTIFICATION BY MASS SPECTROMETRY</scope>
</reference>
<accession>Q24247</accession>
<accession>M9PEG3</accession>
<accession>M9PHG7</accession>
<accession>M9PJL8</accession>
<accession>Q8SY51</accession>
<accession>Q9VYF6</accession>
<name>ITA1_DROME</name>
<protein>
    <recommendedName>
        <fullName>Integrin alpha-PS1</fullName>
    </recommendedName>
    <alternativeName>
        <fullName>Position-specific antigen subunit alpha-1</fullName>
    </alternativeName>
    <alternativeName>
        <fullName>Protein multiple edematous wings</fullName>
    </alternativeName>
    <component>
        <recommendedName>
            <fullName>Integrin alpha-PS1 heavy chain</fullName>
        </recommendedName>
    </component>
    <component>
        <recommendedName>
            <fullName>Integrin alpha-PS1 light chain</fullName>
        </recommendedName>
    </component>
</protein>
<dbReference type="EMBL" id="X73975">
    <property type="protein sequence ID" value="CAA52155.1"/>
    <property type="molecule type" value="mRNA"/>
</dbReference>
<dbReference type="EMBL" id="AE014298">
    <property type="protein sequence ID" value="AAF48242.2"/>
    <property type="molecule type" value="Genomic_DNA"/>
</dbReference>
<dbReference type="EMBL" id="AE014298">
    <property type="protein sequence ID" value="AAN09652.1"/>
    <property type="molecule type" value="Genomic_DNA"/>
</dbReference>
<dbReference type="EMBL" id="AE014298">
    <property type="protein sequence ID" value="AGB95345.1"/>
    <property type="molecule type" value="Genomic_DNA"/>
</dbReference>
<dbReference type="EMBL" id="AE014298">
    <property type="protein sequence ID" value="AGB95346.1"/>
    <property type="molecule type" value="Genomic_DNA"/>
</dbReference>
<dbReference type="EMBL" id="AE014298">
    <property type="protein sequence ID" value="AGB95347.1"/>
    <property type="molecule type" value="Genomic_DNA"/>
</dbReference>
<dbReference type="EMBL" id="AY075338">
    <property type="protein sequence ID" value="AAL68203.1"/>
    <property type="molecule type" value="mRNA"/>
</dbReference>
<dbReference type="PIR" id="S40311">
    <property type="entry name" value="S40311"/>
</dbReference>
<dbReference type="RefSeq" id="NP_001259503.1">
    <molecule id="Q24247-5"/>
    <property type="nucleotide sequence ID" value="NM_001272574.1"/>
</dbReference>
<dbReference type="RefSeq" id="NP_001259504.1">
    <molecule id="Q24247-3"/>
    <property type="nucleotide sequence ID" value="NM_001272575.2"/>
</dbReference>
<dbReference type="RefSeq" id="NP_001259505.1">
    <molecule id="Q24247-4"/>
    <property type="nucleotide sequence ID" value="NM_001272576.2"/>
</dbReference>
<dbReference type="RefSeq" id="NP_511145.2">
    <molecule id="Q24247-1"/>
    <property type="nucleotide sequence ID" value="NM_078590.3"/>
</dbReference>
<dbReference type="RefSeq" id="NP_727679.1">
    <molecule id="Q24247-2"/>
    <property type="nucleotide sequence ID" value="NM_167354.2"/>
</dbReference>
<dbReference type="SMR" id="Q24247"/>
<dbReference type="BioGRID" id="58660">
    <property type="interactions" value="20"/>
</dbReference>
<dbReference type="FunCoup" id="Q24247">
    <property type="interactions" value="233"/>
</dbReference>
<dbReference type="IntAct" id="Q24247">
    <property type="interactions" value="23"/>
</dbReference>
<dbReference type="STRING" id="7227.FBpp0309167"/>
<dbReference type="GlyCosmos" id="Q24247">
    <property type="glycosylation" value="12 sites, No reported glycans"/>
</dbReference>
<dbReference type="GlyGen" id="Q24247">
    <property type="glycosylation" value="12 sites"/>
</dbReference>
<dbReference type="iPTMnet" id="Q24247"/>
<dbReference type="PaxDb" id="7227-FBpp0302767"/>
<dbReference type="DNASU" id="32275"/>
<dbReference type="EnsemblMetazoa" id="FBtr0073731">
    <molecule id="Q24247-2"/>
    <property type="protein sequence ID" value="FBpp0073562"/>
    <property type="gene ID" value="FBgn0004456"/>
</dbReference>
<dbReference type="EnsemblMetazoa" id="FBtr0073732">
    <molecule id="Q24247-1"/>
    <property type="protein sequence ID" value="FBpp0073563"/>
    <property type="gene ID" value="FBgn0004456"/>
</dbReference>
<dbReference type="EnsemblMetazoa" id="FBtr0310647">
    <molecule id="Q24247-3"/>
    <property type="protein sequence ID" value="FBpp0302767"/>
    <property type="gene ID" value="FBgn0004456"/>
</dbReference>
<dbReference type="EnsemblMetazoa" id="FBtr0310648">
    <molecule id="Q24247-4"/>
    <property type="protein sequence ID" value="FBpp0302768"/>
    <property type="gene ID" value="FBgn0004456"/>
</dbReference>
<dbReference type="EnsemblMetazoa" id="FBtr0330398">
    <molecule id="Q24247-5"/>
    <property type="protein sequence ID" value="FBpp0303424"/>
    <property type="gene ID" value="FBgn0004456"/>
</dbReference>
<dbReference type="GeneID" id="32275"/>
<dbReference type="KEGG" id="dme:Dmel_CG1771"/>
<dbReference type="AGR" id="FB:FBgn0004456"/>
<dbReference type="CTD" id="32275"/>
<dbReference type="FlyBase" id="FBgn0004456">
    <property type="gene designation" value="mew"/>
</dbReference>
<dbReference type="VEuPathDB" id="VectorBase:FBgn0004456"/>
<dbReference type="eggNOG" id="KOG3637">
    <property type="taxonomic scope" value="Eukaryota"/>
</dbReference>
<dbReference type="GeneTree" id="ENSGT00940000167229"/>
<dbReference type="HOGENOM" id="CLU_004111_1_0_1"/>
<dbReference type="InParanoid" id="Q24247"/>
<dbReference type="OMA" id="AKKQWIT"/>
<dbReference type="OrthoDB" id="5317514at2759"/>
<dbReference type="PhylomeDB" id="Q24247"/>
<dbReference type="Reactome" id="R-DME-210991">
    <property type="pathway name" value="Basigin interactions"/>
</dbReference>
<dbReference type="Reactome" id="R-DME-216083">
    <property type="pathway name" value="Integrin cell surface interactions"/>
</dbReference>
<dbReference type="Reactome" id="R-DME-3000170">
    <property type="pathway name" value="Syndecan interactions"/>
</dbReference>
<dbReference type="BioGRID-ORCS" id="32275">
    <property type="hits" value="0 hits in 3 CRISPR screens"/>
</dbReference>
<dbReference type="GenomeRNAi" id="32275"/>
<dbReference type="PRO" id="PR:Q24247"/>
<dbReference type="Proteomes" id="UP000000803">
    <property type="component" value="Chromosome X"/>
</dbReference>
<dbReference type="Bgee" id="FBgn0004456">
    <property type="expression patterns" value="Expressed in adult Malpighian tubule bar-shaped cell of initial segment in Malpighian tubule and 242 other cell types or tissues"/>
</dbReference>
<dbReference type="ExpressionAtlas" id="Q24247">
    <property type="expression patterns" value="baseline and differential"/>
</dbReference>
<dbReference type="GO" id="GO:0016324">
    <property type="term" value="C:apical plasma membrane"/>
    <property type="evidence" value="ECO:0000314"/>
    <property type="project" value="UniProtKB"/>
</dbReference>
<dbReference type="GO" id="GO:0009925">
    <property type="term" value="C:basal plasma membrane"/>
    <property type="evidence" value="ECO:0000314"/>
    <property type="project" value="FlyBase"/>
</dbReference>
<dbReference type="GO" id="GO:0009897">
    <property type="term" value="C:external side of plasma membrane"/>
    <property type="evidence" value="ECO:0000318"/>
    <property type="project" value="GO_Central"/>
</dbReference>
<dbReference type="GO" id="GO:0005925">
    <property type="term" value="C:focal adhesion"/>
    <property type="evidence" value="ECO:0000314"/>
    <property type="project" value="FlyBase"/>
</dbReference>
<dbReference type="GO" id="GO:0008305">
    <property type="term" value="C:integrin complex"/>
    <property type="evidence" value="ECO:0000314"/>
    <property type="project" value="FlyBase"/>
</dbReference>
<dbReference type="GO" id="GO:0016328">
    <property type="term" value="C:lateral plasma membrane"/>
    <property type="evidence" value="ECO:0000314"/>
    <property type="project" value="UniProtKB"/>
</dbReference>
<dbReference type="GO" id="GO:0005886">
    <property type="term" value="C:plasma membrane"/>
    <property type="evidence" value="ECO:0000314"/>
    <property type="project" value="FlyBase"/>
</dbReference>
<dbReference type="GO" id="GO:0050839">
    <property type="term" value="F:cell adhesion molecule binding"/>
    <property type="evidence" value="ECO:0000315"/>
    <property type="project" value="FlyBase"/>
</dbReference>
<dbReference type="GO" id="GO:0050840">
    <property type="term" value="F:extracellular matrix binding"/>
    <property type="evidence" value="ECO:0000314"/>
    <property type="project" value="FlyBase"/>
</dbReference>
<dbReference type="GO" id="GO:0005178">
    <property type="term" value="F:integrin binding"/>
    <property type="evidence" value="ECO:0000318"/>
    <property type="project" value="GO_Central"/>
</dbReference>
<dbReference type="GO" id="GO:0046982">
    <property type="term" value="F:protein heterodimerization activity"/>
    <property type="evidence" value="ECO:0000353"/>
    <property type="project" value="FlyBase"/>
</dbReference>
<dbReference type="GO" id="GO:0007015">
    <property type="term" value="P:actin filament organization"/>
    <property type="evidence" value="ECO:0000315"/>
    <property type="project" value="FlyBase"/>
</dbReference>
<dbReference type="GO" id="GO:0007475">
    <property type="term" value="P:apposition of dorsal and ventral imaginal disc-derived wing surfaces"/>
    <property type="evidence" value="ECO:0000303"/>
    <property type="project" value="FlyBase"/>
</dbReference>
<dbReference type="GO" id="GO:0007411">
    <property type="term" value="P:axon guidance"/>
    <property type="evidence" value="ECO:0000315"/>
    <property type="project" value="FlyBase"/>
</dbReference>
<dbReference type="GO" id="GO:0007414">
    <property type="term" value="P:axonal defasciculation"/>
    <property type="evidence" value="ECO:0000315"/>
    <property type="project" value="FlyBase"/>
</dbReference>
<dbReference type="GO" id="GO:0007155">
    <property type="term" value="P:cell adhesion"/>
    <property type="evidence" value="ECO:0000315"/>
    <property type="project" value="FlyBase"/>
</dbReference>
<dbReference type="GO" id="GO:0033627">
    <property type="term" value="P:cell adhesion mediated by integrin"/>
    <property type="evidence" value="ECO:0000314"/>
    <property type="project" value="FlyBase"/>
</dbReference>
<dbReference type="GO" id="GO:0030154">
    <property type="term" value="P:cell differentiation"/>
    <property type="evidence" value="ECO:0000304"/>
    <property type="project" value="FlyBase"/>
</dbReference>
<dbReference type="GO" id="GO:0016477">
    <property type="term" value="P:cell migration"/>
    <property type="evidence" value="ECO:0000304"/>
    <property type="project" value="FlyBase"/>
</dbReference>
<dbReference type="GO" id="GO:0098609">
    <property type="term" value="P:cell-cell adhesion"/>
    <property type="evidence" value="ECO:0000318"/>
    <property type="project" value="GO_Central"/>
</dbReference>
<dbReference type="GO" id="GO:0048567">
    <property type="term" value="P:ectodermal digestive tract morphogenesis"/>
    <property type="evidence" value="ECO:0000304"/>
    <property type="project" value="FlyBase"/>
</dbReference>
<dbReference type="GO" id="GO:0007157">
    <property type="term" value="P:heterophilic cell-cell adhesion via plasma membrane cell adhesion molecules"/>
    <property type="evidence" value="ECO:0000304"/>
    <property type="project" value="FlyBase"/>
</dbReference>
<dbReference type="GO" id="GO:0007476">
    <property type="term" value="P:imaginal disc-derived wing morphogenesis"/>
    <property type="evidence" value="ECO:0000315"/>
    <property type="project" value="FlyBase"/>
</dbReference>
<dbReference type="GO" id="GO:0007229">
    <property type="term" value="P:integrin-mediated signaling pathway"/>
    <property type="evidence" value="ECO:0000318"/>
    <property type="project" value="GO_Central"/>
</dbReference>
<dbReference type="GO" id="GO:0035160">
    <property type="term" value="P:maintenance of epithelial integrity, open tracheal system"/>
    <property type="evidence" value="ECO:0000316"/>
    <property type="project" value="FlyBase"/>
</dbReference>
<dbReference type="GO" id="GO:0007494">
    <property type="term" value="P:midgut development"/>
    <property type="evidence" value="ECO:0000304"/>
    <property type="project" value="FlyBase"/>
</dbReference>
<dbReference type="GO" id="GO:0016203">
    <property type="term" value="P:muscle attachment"/>
    <property type="evidence" value="ECO:0000316"/>
    <property type="project" value="FlyBase"/>
</dbReference>
<dbReference type="GO" id="GO:0007432">
    <property type="term" value="P:salivary gland boundary specification"/>
    <property type="evidence" value="ECO:0000315"/>
    <property type="project" value="FlyBase"/>
</dbReference>
<dbReference type="GO" id="GO:0007431">
    <property type="term" value="P:salivary gland development"/>
    <property type="evidence" value="ECO:0000304"/>
    <property type="project" value="FlyBase"/>
</dbReference>
<dbReference type="GO" id="GO:0007435">
    <property type="term" value="P:salivary gland morphogenesis"/>
    <property type="evidence" value="ECO:0000316"/>
    <property type="project" value="FlyBase"/>
</dbReference>
<dbReference type="GO" id="GO:0007608">
    <property type="term" value="P:sensory perception of smell"/>
    <property type="evidence" value="ECO:0000316"/>
    <property type="project" value="FlyBase"/>
</dbReference>
<dbReference type="GO" id="GO:0034446">
    <property type="term" value="P:substrate adhesion-dependent cell spreading"/>
    <property type="evidence" value="ECO:0000314"/>
    <property type="project" value="FlyBase"/>
</dbReference>
<dbReference type="FunFam" id="2.130.10.130:FF:000022">
    <property type="entry name" value="integrin alpha-PS1 isoform X1"/>
    <property type="match status" value="1"/>
</dbReference>
<dbReference type="FunFam" id="2.60.40.1510:FF:000028">
    <property type="entry name" value="integrin alpha-PS1 isoform X1"/>
    <property type="match status" value="1"/>
</dbReference>
<dbReference type="Gene3D" id="1.20.5.930">
    <property type="entry name" value="Bicelle-embedded integrin alpha(iib) transmembrane segment"/>
    <property type="match status" value="1"/>
</dbReference>
<dbReference type="Gene3D" id="2.130.10.130">
    <property type="entry name" value="Integrin alpha, N-terminal"/>
    <property type="match status" value="1"/>
</dbReference>
<dbReference type="Gene3D" id="2.60.40.1460">
    <property type="entry name" value="Integrin domains. Chain A, domain 2"/>
    <property type="match status" value="1"/>
</dbReference>
<dbReference type="Gene3D" id="2.60.40.1510">
    <property type="entry name" value="ntegrin, alpha v. Chain A, domain 3"/>
    <property type="match status" value="1"/>
</dbReference>
<dbReference type="Gene3D" id="2.60.40.1530">
    <property type="entry name" value="ntegrin, alpha v. Chain A, domain 4"/>
    <property type="match status" value="1"/>
</dbReference>
<dbReference type="InterPro" id="IPR013517">
    <property type="entry name" value="FG-GAP"/>
</dbReference>
<dbReference type="InterPro" id="IPR013519">
    <property type="entry name" value="Int_alpha_beta-p"/>
</dbReference>
<dbReference type="InterPro" id="IPR000413">
    <property type="entry name" value="Integrin_alpha"/>
</dbReference>
<dbReference type="InterPro" id="IPR018184">
    <property type="entry name" value="Integrin_alpha_C_CS"/>
</dbReference>
<dbReference type="InterPro" id="IPR013649">
    <property type="entry name" value="Integrin_alpha_Ig-like_1"/>
</dbReference>
<dbReference type="InterPro" id="IPR048285">
    <property type="entry name" value="Integrin_alpha_Ig-like_2"/>
</dbReference>
<dbReference type="InterPro" id="IPR048286">
    <property type="entry name" value="Integrin_alpha_Ig-like_3"/>
</dbReference>
<dbReference type="InterPro" id="IPR028994">
    <property type="entry name" value="Integrin_alpha_N"/>
</dbReference>
<dbReference type="InterPro" id="IPR032695">
    <property type="entry name" value="Integrin_dom_sf"/>
</dbReference>
<dbReference type="PANTHER" id="PTHR23220">
    <property type="entry name" value="INTEGRIN ALPHA"/>
    <property type="match status" value="1"/>
</dbReference>
<dbReference type="PANTHER" id="PTHR23220:SF122">
    <property type="entry name" value="INTEGRIN ALPHA-PS1"/>
    <property type="match status" value="1"/>
</dbReference>
<dbReference type="Pfam" id="PF01839">
    <property type="entry name" value="FG-GAP"/>
    <property type="match status" value="2"/>
</dbReference>
<dbReference type="Pfam" id="PF08441">
    <property type="entry name" value="Integrin_A_Ig_1"/>
    <property type="match status" value="1"/>
</dbReference>
<dbReference type="Pfam" id="PF20805">
    <property type="entry name" value="Integrin_A_Ig_2"/>
    <property type="match status" value="1"/>
</dbReference>
<dbReference type="Pfam" id="PF20806">
    <property type="entry name" value="Integrin_A_Ig_3"/>
    <property type="match status" value="1"/>
</dbReference>
<dbReference type="PRINTS" id="PR01185">
    <property type="entry name" value="INTEGRINA"/>
</dbReference>
<dbReference type="SMART" id="SM00191">
    <property type="entry name" value="Int_alpha"/>
    <property type="match status" value="5"/>
</dbReference>
<dbReference type="SUPFAM" id="SSF69318">
    <property type="entry name" value="Integrin alpha N-terminal domain"/>
    <property type="match status" value="1"/>
</dbReference>
<dbReference type="SUPFAM" id="SSF69179">
    <property type="entry name" value="Integrin domains"/>
    <property type="match status" value="3"/>
</dbReference>
<dbReference type="PROSITE" id="PS51470">
    <property type="entry name" value="FG_GAP"/>
    <property type="match status" value="7"/>
</dbReference>
<dbReference type="PROSITE" id="PS00242">
    <property type="entry name" value="INTEGRIN_ALPHA"/>
    <property type="match status" value="1"/>
</dbReference>
<keyword id="KW-0025">Alternative splicing</keyword>
<keyword id="KW-0130">Cell adhesion</keyword>
<keyword id="KW-1003">Cell membrane</keyword>
<keyword id="KW-0165">Cleavage on pair of basic residues</keyword>
<keyword id="KW-0903">Direct protein sequencing</keyword>
<keyword id="KW-1015">Disulfide bond</keyword>
<keyword id="KW-0325">Glycoprotein</keyword>
<keyword id="KW-0401">Integrin</keyword>
<keyword id="KW-0472">Membrane</keyword>
<keyword id="KW-0675">Receptor</keyword>
<keyword id="KW-1185">Reference proteome</keyword>
<keyword id="KW-0677">Repeat</keyword>
<keyword id="KW-0732">Signal</keyword>
<keyword id="KW-0812">Transmembrane</keyword>
<keyword id="KW-1133">Transmembrane helix</keyword>
<comment type="function">
    <text evidence="7">Integrin alpha-PS1/beta-PS is a receptor for laminin.</text>
</comment>
<comment type="subunit">
    <text>Heterodimer of an alpha and a beta subunit. The alpha subunit is composed of a heavy and a light chain linked by a disulfide bond. Alpha-PS1 associates with beta-PS.</text>
</comment>
<comment type="subcellular location">
    <subcellularLocation>
        <location evidence="5">Apical cell membrane</location>
        <topology evidence="5">Single-pass type I membrane protein</topology>
    </subcellularLocation>
    <subcellularLocation>
        <location evidence="5">Lateral cell membrane</location>
        <topology evidence="5">Single-pass type I membrane protein</topology>
    </subcellularLocation>
    <subcellularLocation>
        <location evidence="5">Basal cell membrane</location>
        <topology evidence="5">Single-pass type I membrane protein</topology>
    </subcellularLocation>
    <text>During mid-oogenesis, localizes to the apical, to the lateral and to the basal membranes of follicle cells. Apical membrane localization peaks at oogenesis stages 9 and 10A in columnar follicle cells overlying the oocyte while decreases in the most posterior follicle cells. Localization to lateral and basal membranes persists during dorsal appendage morphogenesis, although diminished and often absent.</text>
</comment>
<comment type="alternative products">
    <event type="alternative splicing"/>
    <isoform>
        <id>Q24247-1</id>
        <name>B</name>
        <sequence type="displayed"/>
    </isoform>
    <isoform>
        <id>Q24247-2</id>
        <name>A</name>
        <sequence type="described" ref="VSP_009270"/>
    </isoform>
    <isoform>
        <id>Q24247-3</id>
        <name>C</name>
        <sequence type="described" ref="VSP_053396"/>
    </isoform>
    <isoform>
        <id>Q24247-4</id>
        <name>D</name>
        <sequence type="described" ref="VSP_009270 VSP_053396"/>
    </isoform>
    <isoform>
        <id>Q24247-5</id>
        <name>E</name>
        <sequence type="described" ref="VSP_009270 VSP_053397"/>
    </isoform>
</comment>
<comment type="tissue specificity">
    <text evidence="5 8">Expressed in follicle cells (at protein level). At syncytial blastoderm stage, expressed in the ectoderm but not in the mesodermal precursors. At embryonic stage 7, expressed in dorsal and ventrolateral ectoderm and in some yolk nuclei. At late stage 10, expression is homogeneous in the ectoderm and is particularly abundant in the anterior and posterior midgut primordia. At stage 11, strongly expressed in a metameric pattern in the ectoderm, in the proctodeum and in the posterior midgut primordium. At stage 12, accumulates at the segment boundaries that start to become morphologically visible, similar expression pattern is observed in the central nervous system. In third larval instar wing imaginal disk, strongly expressed in the dorsal compartment, in the adepithelial cells and in patches on the peripodial membrane covering the imaginal disk to the outside.</text>
</comment>
<comment type="developmental stage">
    <text evidence="5 8">Expressed during mid- and late-oogenesis (at protein level). Expressed throughout embryonic and larval development with peaks of expression during mid-embryogenesis and at third larval instar.</text>
</comment>
<comment type="similarity">
    <text evidence="10">Belongs to the integrin alpha chain family.</text>
</comment>
<gene>
    <name type="primary">mew</name>
    <name type="ORF">CG1771</name>
</gene>
<organism>
    <name type="scientific">Drosophila melanogaster</name>
    <name type="common">Fruit fly</name>
    <dbReference type="NCBI Taxonomy" id="7227"/>
    <lineage>
        <taxon>Eukaryota</taxon>
        <taxon>Metazoa</taxon>
        <taxon>Ecdysozoa</taxon>
        <taxon>Arthropoda</taxon>
        <taxon>Hexapoda</taxon>
        <taxon>Insecta</taxon>
        <taxon>Pterygota</taxon>
        <taxon>Neoptera</taxon>
        <taxon>Endopterygota</taxon>
        <taxon>Diptera</taxon>
        <taxon>Brachycera</taxon>
        <taxon>Muscomorpha</taxon>
        <taxon>Ephydroidea</taxon>
        <taxon>Drosophilidae</taxon>
        <taxon>Drosophila</taxon>
        <taxon>Sophophora</taxon>
    </lineage>
</organism>
<feature type="signal peptide" evidence="1">
    <location>
        <begin position="1"/>
        <end position="30"/>
    </location>
</feature>
<feature type="chain" id="PRO_0000016320" description="Integrin alpha-PS1">
    <location>
        <begin position="31"/>
        <end position="1146"/>
    </location>
</feature>
<feature type="chain" id="PRO_0000016321" description="Integrin alpha-PS1 heavy chain" evidence="1">
    <location>
        <begin position="31"/>
        <end position="960" status="uncertain"/>
    </location>
</feature>
<feature type="chain" id="PRO_0000016322" description="Integrin alpha-PS1 light chain" evidence="1">
    <location>
        <begin position="961" status="uncertain"/>
        <end position="1146"/>
    </location>
</feature>
<feature type="topological domain" description="Extracellular" evidence="1">
    <location>
        <begin position="31"/>
        <end position="1085"/>
    </location>
</feature>
<feature type="transmembrane region" description="Helical" evidence="1">
    <location>
        <begin position="1086"/>
        <end position="1106"/>
    </location>
</feature>
<feature type="topological domain" description="Cytoplasmic" evidence="1">
    <location>
        <begin position="1107"/>
        <end position="1146"/>
    </location>
</feature>
<feature type="repeat" description="FG-GAP 1" evidence="2">
    <location>
        <begin position="38"/>
        <end position="105"/>
    </location>
</feature>
<feature type="repeat" description="FG-GAP 2" evidence="2">
    <location>
        <begin position="121"/>
        <end position="186"/>
    </location>
</feature>
<feature type="repeat" description="FG-GAP 3" evidence="2">
    <location>
        <begin position="193"/>
        <end position="245"/>
    </location>
</feature>
<feature type="repeat" description="FG-GAP 4" evidence="2">
    <location>
        <begin position="254"/>
        <end position="303"/>
    </location>
</feature>
<feature type="repeat" description="FG-GAP 5" evidence="2">
    <location>
        <begin position="304"/>
        <end position="366"/>
    </location>
</feature>
<feature type="repeat" description="FG-GAP 6" evidence="2">
    <location>
        <begin position="367"/>
        <end position="422"/>
    </location>
</feature>
<feature type="repeat" description="FG-GAP 7" evidence="2">
    <location>
        <begin position="432"/>
        <end position="494"/>
    </location>
</feature>
<feature type="region of interest" description="Disordered" evidence="3">
    <location>
        <begin position="938"/>
        <end position="958"/>
    </location>
</feature>
<feature type="compositionally biased region" description="Basic and acidic residues" evidence="3">
    <location>
        <begin position="942"/>
        <end position="952"/>
    </location>
</feature>
<feature type="glycosylation site" description="N-linked (GlcNAc...) asparagine" evidence="1">
    <location>
        <position position="68"/>
    </location>
</feature>
<feature type="glycosylation site" description="N-linked (GlcNAc...) asparagine" evidence="1">
    <location>
        <position position="86"/>
    </location>
</feature>
<feature type="glycosylation site" description="N-linked (GlcNAc...) asparagine" evidence="1">
    <location>
        <position position="147"/>
    </location>
</feature>
<feature type="glycosylation site" description="N-linked (GlcNAc...) asparagine" evidence="1">
    <location>
        <position position="470"/>
    </location>
</feature>
<feature type="glycosylation site" description="N-linked (GlcNAc...) asparagine" evidence="1">
    <location>
        <position position="511"/>
    </location>
</feature>
<feature type="glycosylation site" description="N-linked (GlcNAc...) asparagine" evidence="4">
    <location>
        <position position="657"/>
    </location>
</feature>
<feature type="glycosylation site" description="N-linked (GlcNAc...) asparagine" evidence="1">
    <location>
        <position position="680"/>
    </location>
</feature>
<feature type="glycosylation site" description="N-linked (GlcNAc...) asparagine" evidence="6">
    <location>
        <position position="711"/>
    </location>
</feature>
<feature type="glycosylation site" description="N-linked (GlcNAc...) asparagine" evidence="6">
    <location>
        <position position="718"/>
    </location>
</feature>
<feature type="glycosylation site" description="N-linked (GlcNAc...) asparagine" evidence="6">
    <location>
        <position position="761"/>
    </location>
</feature>
<feature type="glycosylation site" description="N-linked (GlcNAc...) asparagine" evidence="1">
    <location>
        <position position="928"/>
    </location>
</feature>
<feature type="glycosylation site" description="N-linked (GlcNAc...) asparagine" evidence="4">
    <location>
        <position position="1027"/>
    </location>
</feature>
<feature type="splice variant" id="VSP_009270" description="In isoform A, isoform D and isoform E." evidence="9">
    <location>
        <begin position="1"/>
        <end position="97"/>
    </location>
</feature>
<feature type="splice variant" id="VSP_053396" description="In isoform C and isoform D." evidence="10">
    <original>RN</original>
    <variation>RTNGAYEINKH</variation>
    <location>
        <begin position="114"/>
        <end position="115"/>
    </location>
</feature>
<feature type="splice variant" id="VSP_053397" description="In isoform E." evidence="10">
    <original>F</original>
    <variation>FXQEGTVGWDLVRRRRRRRRLKLRLPVTAQPRHGWRKTTDKSINNNNNNNHNNNSSNSRNDSDVDVLSLTPPPPPLSIFSWGNDGYYQASAAWWGHHM</variation>
    <location>
        <position position="1146"/>
    </location>
</feature>
<feature type="sequence conflict" description="In Ref. 1; CAA52155." evidence="10" ref="1">
    <original>ML</original>
    <variation>IV</variation>
    <location>
        <begin position="730"/>
        <end position="731"/>
    </location>
</feature>
<feature type="sequence conflict" description="In Ref. 1; CAA52155." evidence="10" ref="1">
    <original>D</original>
    <variation>E</variation>
    <location>
        <position position="815"/>
    </location>
</feature>